<name>PGK_PHOLL</name>
<reference key="1">
    <citation type="journal article" date="2003" name="Nat. Biotechnol.">
        <title>The genome sequence of the entomopathogenic bacterium Photorhabdus luminescens.</title>
        <authorList>
            <person name="Duchaud E."/>
            <person name="Rusniok C."/>
            <person name="Frangeul L."/>
            <person name="Buchrieser C."/>
            <person name="Givaudan A."/>
            <person name="Taourit S."/>
            <person name="Bocs S."/>
            <person name="Boursaux-Eude C."/>
            <person name="Chandler M."/>
            <person name="Charles J.-F."/>
            <person name="Dassa E."/>
            <person name="Derose R."/>
            <person name="Derzelle S."/>
            <person name="Freyssinet G."/>
            <person name="Gaudriault S."/>
            <person name="Medigue C."/>
            <person name="Lanois A."/>
            <person name="Powell K."/>
            <person name="Siguier P."/>
            <person name="Vincent R."/>
            <person name="Wingate V."/>
            <person name="Zouine M."/>
            <person name="Glaser P."/>
            <person name="Boemare N."/>
            <person name="Danchin A."/>
            <person name="Kunst F."/>
        </authorList>
    </citation>
    <scope>NUCLEOTIDE SEQUENCE [LARGE SCALE GENOMIC DNA]</scope>
    <source>
        <strain>DSM 15139 / CIP 105565 / TT01</strain>
    </source>
</reference>
<comment type="catalytic activity">
    <reaction evidence="1">
        <text>(2R)-3-phosphoglycerate + ATP = (2R)-3-phospho-glyceroyl phosphate + ADP</text>
        <dbReference type="Rhea" id="RHEA:14801"/>
        <dbReference type="ChEBI" id="CHEBI:30616"/>
        <dbReference type="ChEBI" id="CHEBI:57604"/>
        <dbReference type="ChEBI" id="CHEBI:58272"/>
        <dbReference type="ChEBI" id="CHEBI:456216"/>
        <dbReference type="EC" id="2.7.2.3"/>
    </reaction>
</comment>
<comment type="pathway">
    <text evidence="1">Carbohydrate degradation; glycolysis; pyruvate from D-glyceraldehyde 3-phosphate: step 2/5.</text>
</comment>
<comment type="subunit">
    <text evidence="1">Monomer.</text>
</comment>
<comment type="subcellular location">
    <subcellularLocation>
        <location evidence="1">Cytoplasm</location>
    </subcellularLocation>
</comment>
<comment type="similarity">
    <text evidence="1">Belongs to the phosphoglycerate kinase family.</text>
</comment>
<proteinExistence type="inferred from homology"/>
<sequence>MSVIKMTDLDLAGKRILIRADLNVPVKDGKVTSDARIRASLPTIEAALKQGAKVMITSHLGRPTEGEYSEEFSLKPVVDYLEEKLSSPVRLEKEYLEGVDVAEGELVVLENVRFNKGEKKDDETLAKKYASLCDIYVMDAFGTAHRAQASTHGVAKFAPVACAGPLLSAELEALGKALDNPARPMVAIVGGSKVSTKLTVLDTLSKIADQLIVGGGIANTFVAAEGHNVGRSLYEDDLLPEAKKLLISCDIPVPTDVRVATEFSETAEAILKSTHDIKDDEQILDLGDESAQRLADILKNAKTILWNGPVGVFEFPNFRQGTEIVARAIADSDAFSIAGGGDTLAAIDLFGIADKISYISTGGGAFLEFVEGKKLPAVVMLEERAKQ</sequence>
<evidence type="ECO:0000255" key="1">
    <source>
        <dbReference type="HAMAP-Rule" id="MF_00145"/>
    </source>
</evidence>
<protein>
    <recommendedName>
        <fullName evidence="1">Phosphoglycerate kinase</fullName>
        <ecNumber evidence="1">2.7.2.3</ecNumber>
    </recommendedName>
</protein>
<feature type="chain" id="PRO_0000145981" description="Phosphoglycerate kinase">
    <location>
        <begin position="1"/>
        <end position="387"/>
    </location>
</feature>
<feature type="binding site" evidence="1">
    <location>
        <begin position="21"/>
        <end position="23"/>
    </location>
    <ligand>
        <name>substrate</name>
    </ligand>
</feature>
<feature type="binding site" evidence="1">
    <location>
        <position position="36"/>
    </location>
    <ligand>
        <name>substrate</name>
    </ligand>
</feature>
<feature type="binding site" evidence="1">
    <location>
        <begin position="59"/>
        <end position="62"/>
    </location>
    <ligand>
        <name>substrate</name>
    </ligand>
</feature>
<feature type="binding site" evidence="1">
    <location>
        <position position="113"/>
    </location>
    <ligand>
        <name>substrate</name>
    </ligand>
</feature>
<feature type="binding site" evidence="1">
    <location>
        <position position="146"/>
    </location>
    <ligand>
        <name>substrate</name>
    </ligand>
</feature>
<feature type="binding site" evidence="1">
    <location>
        <position position="197"/>
    </location>
    <ligand>
        <name>ATP</name>
        <dbReference type="ChEBI" id="CHEBI:30616"/>
    </ligand>
</feature>
<feature type="binding site" evidence="1">
    <location>
        <position position="314"/>
    </location>
    <ligand>
        <name>ATP</name>
        <dbReference type="ChEBI" id="CHEBI:30616"/>
    </ligand>
</feature>
<feature type="binding site" evidence="1">
    <location>
        <begin position="340"/>
        <end position="343"/>
    </location>
    <ligand>
        <name>ATP</name>
        <dbReference type="ChEBI" id="CHEBI:30616"/>
    </ligand>
</feature>
<accession>Q7N7Z5</accession>
<organism>
    <name type="scientific">Photorhabdus laumondii subsp. laumondii (strain DSM 15139 / CIP 105565 / TT01)</name>
    <name type="common">Photorhabdus luminescens subsp. laumondii</name>
    <dbReference type="NCBI Taxonomy" id="243265"/>
    <lineage>
        <taxon>Bacteria</taxon>
        <taxon>Pseudomonadati</taxon>
        <taxon>Pseudomonadota</taxon>
        <taxon>Gammaproteobacteria</taxon>
        <taxon>Enterobacterales</taxon>
        <taxon>Morganellaceae</taxon>
        <taxon>Photorhabdus</taxon>
    </lineage>
</organism>
<keyword id="KW-0067">ATP-binding</keyword>
<keyword id="KW-0963">Cytoplasm</keyword>
<keyword id="KW-0324">Glycolysis</keyword>
<keyword id="KW-0418">Kinase</keyword>
<keyword id="KW-0547">Nucleotide-binding</keyword>
<keyword id="KW-1185">Reference proteome</keyword>
<keyword id="KW-0808">Transferase</keyword>
<gene>
    <name evidence="1" type="primary">pgk</name>
    <name type="ordered locus">plu0956</name>
</gene>
<dbReference type="EC" id="2.7.2.3" evidence="1"/>
<dbReference type="EMBL" id="BX571862">
    <property type="protein sequence ID" value="CAE13251.1"/>
    <property type="molecule type" value="Genomic_DNA"/>
</dbReference>
<dbReference type="RefSeq" id="WP_011145319.1">
    <property type="nucleotide sequence ID" value="NC_005126.1"/>
</dbReference>
<dbReference type="SMR" id="Q7N7Z5"/>
<dbReference type="STRING" id="243265.plu0956"/>
<dbReference type="GeneID" id="48847245"/>
<dbReference type="KEGG" id="plu:plu0956"/>
<dbReference type="eggNOG" id="COG0126">
    <property type="taxonomic scope" value="Bacteria"/>
</dbReference>
<dbReference type="HOGENOM" id="CLU_025427_0_2_6"/>
<dbReference type="OrthoDB" id="9808460at2"/>
<dbReference type="UniPathway" id="UPA00109">
    <property type="reaction ID" value="UER00185"/>
</dbReference>
<dbReference type="Proteomes" id="UP000002514">
    <property type="component" value="Chromosome"/>
</dbReference>
<dbReference type="GO" id="GO:0005829">
    <property type="term" value="C:cytosol"/>
    <property type="evidence" value="ECO:0007669"/>
    <property type="project" value="TreeGrafter"/>
</dbReference>
<dbReference type="GO" id="GO:0043531">
    <property type="term" value="F:ADP binding"/>
    <property type="evidence" value="ECO:0007669"/>
    <property type="project" value="TreeGrafter"/>
</dbReference>
<dbReference type="GO" id="GO:0005524">
    <property type="term" value="F:ATP binding"/>
    <property type="evidence" value="ECO:0007669"/>
    <property type="project" value="UniProtKB-KW"/>
</dbReference>
<dbReference type="GO" id="GO:0004618">
    <property type="term" value="F:phosphoglycerate kinase activity"/>
    <property type="evidence" value="ECO:0007669"/>
    <property type="project" value="UniProtKB-UniRule"/>
</dbReference>
<dbReference type="GO" id="GO:0006094">
    <property type="term" value="P:gluconeogenesis"/>
    <property type="evidence" value="ECO:0007669"/>
    <property type="project" value="TreeGrafter"/>
</dbReference>
<dbReference type="GO" id="GO:0006096">
    <property type="term" value="P:glycolytic process"/>
    <property type="evidence" value="ECO:0007669"/>
    <property type="project" value="UniProtKB-UniRule"/>
</dbReference>
<dbReference type="FunFam" id="3.40.50.1260:FF:000001">
    <property type="entry name" value="Phosphoglycerate kinase"/>
    <property type="match status" value="1"/>
</dbReference>
<dbReference type="FunFam" id="3.40.50.1260:FF:000002">
    <property type="entry name" value="Phosphoglycerate kinase"/>
    <property type="match status" value="1"/>
</dbReference>
<dbReference type="Gene3D" id="3.40.50.1260">
    <property type="entry name" value="Phosphoglycerate kinase, N-terminal domain"/>
    <property type="match status" value="2"/>
</dbReference>
<dbReference type="HAMAP" id="MF_00145">
    <property type="entry name" value="Phosphoglyc_kinase"/>
    <property type="match status" value="1"/>
</dbReference>
<dbReference type="InterPro" id="IPR001576">
    <property type="entry name" value="Phosphoglycerate_kinase"/>
</dbReference>
<dbReference type="InterPro" id="IPR015824">
    <property type="entry name" value="Phosphoglycerate_kinase_N"/>
</dbReference>
<dbReference type="InterPro" id="IPR036043">
    <property type="entry name" value="Phosphoglycerate_kinase_sf"/>
</dbReference>
<dbReference type="PANTHER" id="PTHR11406">
    <property type="entry name" value="PHOSPHOGLYCERATE KINASE"/>
    <property type="match status" value="1"/>
</dbReference>
<dbReference type="PANTHER" id="PTHR11406:SF23">
    <property type="entry name" value="PHOSPHOGLYCERATE KINASE 1, CHLOROPLASTIC-RELATED"/>
    <property type="match status" value="1"/>
</dbReference>
<dbReference type="Pfam" id="PF00162">
    <property type="entry name" value="PGK"/>
    <property type="match status" value="1"/>
</dbReference>
<dbReference type="PIRSF" id="PIRSF000724">
    <property type="entry name" value="Pgk"/>
    <property type="match status" value="1"/>
</dbReference>
<dbReference type="PRINTS" id="PR00477">
    <property type="entry name" value="PHGLYCKINASE"/>
</dbReference>
<dbReference type="SUPFAM" id="SSF53748">
    <property type="entry name" value="Phosphoglycerate kinase"/>
    <property type="match status" value="1"/>
</dbReference>